<organism>
    <name type="scientific">Corynebacterium jeikeium (strain K411)</name>
    <dbReference type="NCBI Taxonomy" id="306537"/>
    <lineage>
        <taxon>Bacteria</taxon>
        <taxon>Bacillati</taxon>
        <taxon>Actinomycetota</taxon>
        <taxon>Actinomycetes</taxon>
        <taxon>Mycobacteriales</taxon>
        <taxon>Corynebacteriaceae</taxon>
        <taxon>Corynebacterium</taxon>
    </lineage>
</organism>
<gene>
    <name evidence="1" type="primary">rpmJ</name>
    <name type="ordered locus">jk0475</name>
</gene>
<keyword id="KW-1185">Reference proteome</keyword>
<keyword id="KW-0687">Ribonucleoprotein</keyword>
<keyword id="KW-0689">Ribosomal protein</keyword>
<dbReference type="EMBL" id="CR931997">
    <property type="protein sequence ID" value="CAI36632.1"/>
    <property type="molecule type" value="Genomic_DNA"/>
</dbReference>
<dbReference type="SMR" id="Q4JX25"/>
<dbReference type="STRING" id="306537.jk0475"/>
<dbReference type="KEGG" id="cjk:jk0475"/>
<dbReference type="eggNOG" id="COG0257">
    <property type="taxonomic scope" value="Bacteria"/>
</dbReference>
<dbReference type="HOGENOM" id="CLU_135723_3_1_11"/>
<dbReference type="OrthoDB" id="9801558at2"/>
<dbReference type="Proteomes" id="UP000000545">
    <property type="component" value="Chromosome"/>
</dbReference>
<dbReference type="GO" id="GO:1990904">
    <property type="term" value="C:ribonucleoprotein complex"/>
    <property type="evidence" value="ECO:0007669"/>
    <property type="project" value="UniProtKB-KW"/>
</dbReference>
<dbReference type="GO" id="GO:0005840">
    <property type="term" value="C:ribosome"/>
    <property type="evidence" value="ECO:0007669"/>
    <property type="project" value="UniProtKB-KW"/>
</dbReference>
<dbReference type="GO" id="GO:0003735">
    <property type="term" value="F:structural constituent of ribosome"/>
    <property type="evidence" value="ECO:0007669"/>
    <property type="project" value="InterPro"/>
</dbReference>
<dbReference type="GO" id="GO:0006412">
    <property type="term" value="P:translation"/>
    <property type="evidence" value="ECO:0007669"/>
    <property type="project" value="UniProtKB-UniRule"/>
</dbReference>
<dbReference type="HAMAP" id="MF_00251">
    <property type="entry name" value="Ribosomal_bL36"/>
    <property type="match status" value="1"/>
</dbReference>
<dbReference type="InterPro" id="IPR000473">
    <property type="entry name" value="Ribosomal_bL36"/>
</dbReference>
<dbReference type="InterPro" id="IPR035977">
    <property type="entry name" value="Ribosomal_bL36_sp"/>
</dbReference>
<dbReference type="InterPro" id="IPR047621">
    <property type="entry name" value="Ribosomal_L36_bact"/>
</dbReference>
<dbReference type="NCBIfam" id="NF002021">
    <property type="entry name" value="PRK00831.1"/>
    <property type="match status" value="1"/>
</dbReference>
<dbReference type="PANTHER" id="PTHR47781">
    <property type="entry name" value="50S RIBOSOMAL PROTEIN L36 2"/>
    <property type="match status" value="1"/>
</dbReference>
<dbReference type="PANTHER" id="PTHR47781:SF1">
    <property type="entry name" value="LARGE RIBOSOMAL SUBUNIT PROTEIN BL36B"/>
    <property type="match status" value="1"/>
</dbReference>
<dbReference type="Pfam" id="PF00444">
    <property type="entry name" value="Ribosomal_L36"/>
    <property type="match status" value="1"/>
</dbReference>
<dbReference type="SUPFAM" id="SSF57840">
    <property type="entry name" value="Ribosomal protein L36"/>
    <property type="match status" value="1"/>
</dbReference>
<comment type="similarity">
    <text evidence="1">Belongs to the bacterial ribosomal protein bL36 family.</text>
</comment>
<reference key="1">
    <citation type="journal article" date="2005" name="J. Bacteriol.">
        <title>Complete genome sequence and analysis of the multiresistant nosocomial pathogen Corynebacterium jeikeium K411, a lipid-requiring bacterium of the human skin flora.</title>
        <authorList>
            <person name="Tauch A."/>
            <person name="Kaiser O."/>
            <person name="Hain T."/>
            <person name="Goesmann A."/>
            <person name="Weisshaar B."/>
            <person name="Albersmeier A."/>
            <person name="Bekel T."/>
            <person name="Bischoff N."/>
            <person name="Brune I."/>
            <person name="Chakraborty T."/>
            <person name="Kalinowski J."/>
            <person name="Meyer F."/>
            <person name="Rupp O."/>
            <person name="Schneiker S."/>
            <person name="Viehoever P."/>
            <person name="Puehler A."/>
        </authorList>
    </citation>
    <scope>NUCLEOTIDE SEQUENCE [LARGE SCALE GENOMIC DNA]</scope>
    <source>
        <strain>K411</strain>
    </source>
</reference>
<evidence type="ECO:0000255" key="1">
    <source>
        <dbReference type="HAMAP-Rule" id="MF_00251"/>
    </source>
</evidence>
<evidence type="ECO:0000305" key="2"/>
<protein>
    <recommendedName>
        <fullName evidence="1">Large ribosomal subunit protein bL36</fullName>
    </recommendedName>
    <alternativeName>
        <fullName evidence="2">50S ribosomal protein L36</fullName>
    </alternativeName>
</protein>
<sequence>MKVRKSLRSLKNKPGAQVVRRRGKVYVINKKEPRFKARQG</sequence>
<name>RL36_CORJK</name>
<proteinExistence type="inferred from homology"/>
<feature type="chain" id="PRO_0000302190" description="Large ribosomal subunit protein bL36">
    <location>
        <begin position="1"/>
        <end position="40"/>
    </location>
</feature>
<accession>Q4JX25</accession>